<protein>
    <recommendedName>
        <fullName evidence="1">Large ribosomal subunit protein uL14</fullName>
    </recommendedName>
    <alternativeName>
        <fullName evidence="2">50S ribosomal protein L14</fullName>
    </alternativeName>
</protein>
<comment type="function">
    <text evidence="1">Binds to 23S rRNA. Forms part of two intersubunit bridges in the 70S ribosome.</text>
</comment>
<comment type="subunit">
    <text evidence="1">Part of the 50S ribosomal subunit. Forms a cluster with proteins L3 and L19. In the 70S ribosome, L14 and L19 interact and together make contacts with the 16S rRNA in bridges B5 and B8.</text>
</comment>
<comment type="similarity">
    <text evidence="1">Belongs to the universal ribosomal protein uL14 family.</text>
</comment>
<gene>
    <name evidence="1" type="primary">rplN</name>
    <name type="ordered locus">STH3065</name>
</gene>
<evidence type="ECO:0000255" key="1">
    <source>
        <dbReference type="HAMAP-Rule" id="MF_01367"/>
    </source>
</evidence>
<evidence type="ECO:0000305" key="2"/>
<organism>
    <name type="scientific">Symbiobacterium thermophilum (strain DSM 24528 / JCM 14929 / IAM 14863 / T)</name>
    <dbReference type="NCBI Taxonomy" id="292459"/>
    <lineage>
        <taxon>Bacteria</taxon>
        <taxon>Bacillati</taxon>
        <taxon>Bacillota</taxon>
        <taxon>Clostridia</taxon>
        <taxon>Eubacteriales</taxon>
        <taxon>Symbiobacteriaceae</taxon>
        <taxon>Symbiobacterium</taxon>
    </lineage>
</organism>
<sequence length="122" mass="13542">MIQVQTRLQVADNTGAKELMCIKVLGGSWRRYANIGDVIVCSVKEASPGGVVKKGDVVRAVVVRTKKGLRREDGSYIRFDENAAVILKDDKEPRGTRIFGPVARELRDKEFMKIISLAPEVL</sequence>
<reference key="1">
    <citation type="journal article" date="2004" name="Nucleic Acids Res.">
        <title>Genome sequence of Symbiobacterium thermophilum, an uncultivable bacterium that depends on microbial commensalism.</title>
        <authorList>
            <person name="Ueda K."/>
            <person name="Yamashita A."/>
            <person name="Ishikawa J."/>
            <person name="Shimada M."/>
            <person name="Watsuji T."/>
            <person name="Morimura K."/>
            <person name="Ikeda H."/>
            <person name="Hattori M."/>
            <person name="Beppu T."/>
        </authorList>
    </citation>
    <scope>NUCLEOTIDE SEQUENCE [LARGE SCALE GENOMIC DNA]</scope>
    <source>
        <strain>DSM 24528 / JCM 14929 / IAM 14863 / T</strain>
    </source>
</reference>
<feature type="chain" id="PRO_1000055732" description="Large ribosomal subunit protein uL14">
    <location>
        <begin position="1"/>
        <end position="122"/>
    </location>
</feature>
<name>RL14_SYMTH</name>
<dbReference type="EMBL" id="AP006840">
    <property type="protein sequence ID" value="BAD42047.1"/>
    <property type="molecule type" value="Genomic_DNA"/>
</dbReference>
<dbReference type="RefSeq" id="WP_011197180.1">
    <property type="nucleotide sequence ID" value="NC_006177.1"/>
</dbReference>
<dbReference type="SMR" id="Q67JV3"/>
<dbReference type="STRING" id="292459.STH3065"/>
<dbReference type="KEGG" id="sth:STH3065"/>
<dbReference type="eggNOG" id="COG0093">
    <property type="taxonomic scope" value="Bacteria"/>
</dbReference>
<dbReference type="HOGENOM" id="CLU_095071_2_1_9"/>
<dbReference type="OrthoDB" id="9806379at2"/>
<dbReference type="Proteomes" id="UP000000417">
    <property type="component" value="Chromosome"/>
</dbReference>
<dbReference type="GO" id="GO:0022625">
    <property type="term" value="C:cytosolic large ribosomal subunit"/>
    <property type="evidence" value="ECO:0007669"/>
    <property type="project" value="TreeGrafter"/>
</dbReference>
<dbReference type="GO" id="GO:0070180">
    <property type="term" value="F:large ribosomal subunit rRNA binding"/>
    <property type="evidence" value="ECO:0007669"/>
    <property type="project" value="TreeGrafter"/>
</dbReference>
<dbReference type="GO" id="GO:0003735">
    <property type="term" value="F:structural constituent of ribosome"/>
    <property type="evidence" value="ECO:0007669"/>
    <property type="project" value="InterPro"/>
</dbReference>
<dbReference type="GO" id="GO:0006412">
    <property type="term" value="P:translation"/>
    <property type="evidence" value="ECO:0007669"/>
    <property type="project" value="UniProtKB-UniRule"/>
</dbReference>
<dbReference type="CDD" id="cd00337">
    <property type="entry name" value="Ribosomal_uL14"/>
    <property type="match status" value="1"/>
</dbReference>
<dbReference type="FunFam" id="2.40.150.20:FF:000001">
    <property type="entry name" value="50S ribosomal protein L14"/>
    <property type="match status" value="1"/>
</dbReference>
<dbReference type="Gene3D" id="2.40.150.20">
    <property type="entry name" value="Ribosomal protein L14"/>
    <property type="match status" value="1"/>
</dbReference>
<dbReference type="HAMAP" id="MF_01367">
    <property type="entry name" value="Ribosomal_uL14"/>
    <property type="match status" value="1"/>
</dbReference>
<dbReference type="InterPro" id="IPR000218">
    <property type="entry name" value="Ribosomal_uL14"/>
</dbReference>
<dbReference type="InterPro" id="IPR005745">
    <property type="entry name" value="Ribosomal_uL14_bac-type"/>
</dbReference>
<dbReference type="InterPro" id="IPR019972">
    <property type="entry name" value="Ribosomal_uL14_CS"/>
</dbReference>
<dbReference type="InterPro" id="IPR036853">
    <property type="entry name" value="Ribosomal_uL14_sf"/>
</dbReference>
<dbReference type="NCBIfam" id="TIGR01067">
    <property type="entry name" value="rplN_bact"/>
    <property type="match status" value="1"/>
</dbReference>
<dbReference type="PANTHER" id="PTHR11761">
    <property type="entry name" value="50S/60S RIBOSOMAL PROTEIN L14/L23"/>
    <property type="match status" value="1"/>
</dbReference>
<dbReference type="PANTHER" id="PTHR11761:SF3">
    <property type="entry name" value="LARGE RIBOSOMAL SUBUNIT PROTEIN UL14M"/>
    <property type="match status" value="1"/>
</dbReference>
<dbReference type="Pfam" id="PF00238">
    <property type="entry name" value="Ribosomal_L14"/>
    <property type="match status" value="1"/>
</dbReference>
<dbReference type="SMART" id="SM01374">
    <property type="entry name" value="Ribosomal_L14"/>
    <property type="match status" value="1"/>
</dbReference>
<dbReference type="SUPFAM" id="SSF50193">
    <property type="entry name" value="Ribosomal protein L14"/>
    <property type="match status" value="1"/>
</dbReference>
<dbReference type="PROSITE" id="PS00049">
    <property type="entry name" value="RIBOSOMAL_L14"/>
    <property type="match status" value="1"/>
</dbReference>
<accession>Q67JV3</accession>
<keyword id="KW-1185">Reference proteome</keyword>
<keyword id="KW-0687">Ribonucleoprotein</keyword>
<keyword id="KW-0689">Ribosomal protein</keyword>
<keyword id="KW-0694">RNA-binding</keyword>
<keyword id="KW-0699">rRNA-binding</keyword>
<proteinExistence type="inferred from homology"/>